<comment type="function">
    <text evidence="1">Essential cell division protein.</text>
</comment>
<comment type="subcellular location">
    <subcellularLocation>
        <location evidence="1">Cell inner membrane</location>
        <topology evidence="1">Single-pass type II membrane protein</topology>
    </subcellularLocation>
    <text evidence="1">Localizes to the division septum.</text>
</comment>
<comment type="similarity">
    <text evidence="1">Belongs to the FtsQ/DivIB family. FtsQ subfamily.</text>
</comment>
<proteinExistence type="inferred from homology"/>
<dbReference type="EMBL" id="AF032998">
    <property type="protein sequence ID" value="AAC38574.1"/>
    <property type="molecule type" value="Genomic_DNA"/>
</dbReference>
<dbReference type="EMBL" id="CP001340">
    <property type="protein sequence ID" value="ACL96090.1"/>
    <property type="molecule type" value="Genomic_DNA"/>
</dbReference>
<dbReference type="RefSeq" id="WP_012640522.1">
    <property type="nucleotide sequence ID" value="NC_011916.1"/>
</dbReference>
<dbReference type="RefSeq" id="YP_002517998.1">
    <property type="nucleotide sequence ID" value="NC_011916.1"/>
</dbReference>
<dbReference type="SMR" id="B8H082"/>
<dbReference type="GeneID" id="7332975"/>
<dbReference type="KEGG" id="ccs:CCNA_02625"/>
<dbReference type="PATRIC" id="fig|565050.3.peg.2574"/>
<dbReference type="HOGENOM" id="CLU_061141_1_1_5"/>
<dbReference type="OrthoDB" id="9783091at2"/>
<dbReference type="PhylomeDB" id="B8H082"/>
<dbReference type="Proteomes" id="UP000001364">
    <property type="component" value="Chromosome"/>
</dbReference>
<dbReference type="GO" id="GO:0032153">
    <property type="term" value="C:cell division site"/>
    <property type="evidence" value="ECO:0007669"/>
    <property type="project" value="UniProtKB-UniRule"/>
</dbReference>
<dbReference type="GO" id="GO:0005886">
    <property type="term" value="C:plasma membrane"/>
    <property type="evidence" value="ECO:0007669"/>
    <property type="project" value="UniProtKB-SubCell"/>
</dbReference>
<dbReference type="GO" id="GO:0090529">
    <property type="term" value="P:cell septum assembly"/>
    <property type="evidence" value="ECO:0007669"/>
    <property type="project" value="InterPro"/>
</dbReference>
<dbReference type="GO" id="GO:0043093">
    <property type="term" value="P:FtsZ-dependent cytokinesis"/>
    <property type="evidence" value="ECO:0007669"/>
    <property type="project" value="UniProtKB-UniRule"/>
</dbReference>
<dbReference type="Gene3D" id="3.10.20.310">
    <property type="entry name" value="membrane protein fhac"/>
    <property type="match status" value="1"/>
</dbReference>
<dbReference type="HAMAP" id="MF_00911">
    <property type="entry name" value="FtsQ_subfam"/>
    <property type="match status" value="1"/>
</dbReference>
<dbReference type="InterPro" id="IPR005548">
    <property type="entry name" value="Cell_div_FtsQ/DivIB_C"/>
</dbReference>
<dbReference type="InterPro" id="IPR026579">
    <property type="entry name" value="FtsQ"/>
</dbReference>
<dbReference type="InterPro" id="IPR034746">
    <property type="entry name" value="POTRA"/>
</dbReference>
<dbReference type="InterPro" id="IPR013685">
    <property type="entry name" value="POTRA_FtsQ_type"/>
</dbReference>
<dbReference type="PANTHER" id="PTHR35851">
    <property type="entry name" value="CELL DIVISION PROTEIN FTSQ"/>
    <property type="match status" value="1"/>
</dbReference>
<dbReference type="PANTHER" id="PTHR35851:SF1">
    <property type="entry name" value="CELL DIVISION PROTEIN FTSQ"/>
    <property type="match status" value="1"/>
</dbReference>
<dbReference type="Pfam" id="PF03799">
    <property type="entry name" value="FtsQ_DivIB_C"/>
    <property type="match status" value="1"/>
</dbReference>
<dbReference type="Pfam" id="PF08478">
    <property type="entry name" value="POTRA_1"/>
    <property type="match status" value="1"/>
</dbReference>
<dbReference type="PROSITE" id="PS51779">
    <property type="entry name" value="POTRA"/>
    <property type="match status" value="1"/>
</dbReference>
<sequence length="302" mass="32247">MPAVVRGGPPKPRRPRAEAPASPSKGKPAPRKAQPAAKLHAARGVGLSPTVALSVAGAALGLGLVVMLATGHRAERLGASMVRGVDNTFASAGFRLKTVHIRGASATAQADILKASGLYLDQPTLGMDLADVRDRVQGVGWVKDAKVVRMLPDTVLIAVEERPALAVWQNHGRMKVIDSEGQVITEADPARFPQLPLVVGQGADQAAGLILPAVASRPRLRDRLEAMVRVDERRWDLRLKDGSLIQLPAIDEESALIQLDQLDQRQRILDMGFARIDLRDPEMVAVRPRDAVLPGQPAADGA</sequence>
<accession>B8H082</accession>
<accession>O68326</accession>
<gene>
    <name evidence="1" type="primary">ftsQ</name>
    <name type="ordered locus">CCNA_02625</name>
</gene>
<feature type="chain" id="PRO_0000378289" description="Cell division protein FtsQ">
    <location>
        <begin position="1"/>
        <end position="302"/>
    </location>
</feature>
<feature type="topological domain" description="Cytoplasmic" evidence="1">
    <location>
        <begin position="1"/>
        <end position="50"/>
    </location>
</feature>
<feature type="transmembrane region" description="Helical" evidence="1">
    <location>
        <begin position="51"/>
        <end position="71"/>
    </location>
</feature>
<feature type="topological domain" description="Periplasmic" evidence="1">
    <location>
        <begin position="72"/>
        <end position="302"/>
    </location>
</feature>
<feature type="domain" description="POTRA" evidence="2">
    <location>
        <begin position="94"/>
        <end position="162"/>
    </location>
</feature>
<feature type="region of interest" description="Disordered" evidence="3">
    <location>
        <begin position="1"/>
        <end position="41"/>
    </location>
</feature>
<feature type="compositionally biased region" description="Low complexity" evidence="3">
    <location>
        <begin position="18"/>
        <end position="38"/>
    </location>
</feature>
<name>FTSQ_CAUVN</name>
<evidence type="ECO:0000255" key="1">
    <source>
        <dbReference type="HAMAP-Rule" id="MF_00911"/>
    </source>
</evidence>
<evidence type="ECO:0000255" key="2">
    <source>
        <dbReference type="PROSITE-ProRule" id="PRU01115"/>
    </source>
</evidence>
<evidence type="ECO:0000256" key="3">
    <source>
        <dbReference type="SAM" id="MobiDB-lite"/>
    </source>
</evidence>
<organism>
    <name type="scientific">Caulobacter vibrioides (strain NA1000 / CB15N)</name>
    <name type="common">Caulobacter crescentus</name>
    <dbReference type="NCBI Taxonomy" id="565050"/>
    <lineage>
        <taxon>Bacteria</taxon>
        <taxon>Pseudomonadati</taxon>
        <taxon>Pseudomonadota</taxon>
        <taxon>Alphaproteobacteria</taxon>
        <taxon>Caulobacterales</taxon>
        <taxon>Caulobacteraceae</taxon>
        <taxon>Caulobacter</taxon>
    </lineage>
</organism>
<protein>
    <recommendedName>
        <fullName evidence="1">Cell division protein FtsQ</fullName>
    </recommendedName>
</protein>
<reference key="1">
    <citation type="journal article" date="1998" name="Mol. Microbiol.">
        <title>Ordered expression of ftsQA and ftsZ during the Caulobacter crescentus cell cycle.</title>
        <authorList>
            <person name="Sackett M.J."/>
            <person name="Kelly A.J."/>
            <person name="Brun Y.V."/>
        </authorList>
    </citation>
    <scope>NUCLEOTIDE SEQUENCE [GENOMIC DNA]</scope>
</reference>
<reference key="2">
    <citation type="journal article" date="2010" name="J. Bacteriol.">
        <title>The genetic basis of laboratory adaptation in Caulobacter crescentus.</title>
        <authorList>
            <person name="Marks M.E."/>
            <person name="Castro-Rojas C.M."/>
            <person name="Teiling C."/>
            <person name="Du L."/>
            <person name="Kapatral V."/>
            <person name="Walunas T.L."/>
            <person name="Crosson S."/>
        </authorList>
    </citation>
    <scope>NUCLEOTIDE SEQUENCE [LARGE SCALE GENOMIC DNA]</scope>
    <source>
        <strain>NA1000 / CB15N</strain>
    </source>
</reference>
<keyword id="KW-0131">Cell cycle</keyword>
<keyword id="KW-0132">Cell division</keyword>
<keyword id="KW-0997">Cell inner membrane</keyword>
<keyword id="KW-1003">Cell membrane</keyword>
<keyword id="KW-0472">Membrane</keyword>
<keyword id="KW-1185">Reference proteome</keyword>
<keyword id="KW-0812">Transmembrane</keyword>
<keyword id="KW-1133">Transmembrane helix</keyword>